<feature type="chain" id="PRO_0000268753" description="UPF0401 protein YubL">
    <location>
        <begin position="1"/>
        <end position="80"/>
    </location>
</feature>
<organism>
    <name type="scientific">Salmonella typhimurium (strain LT2 / SGSC1412 / ATCC 700720)</name>
    <dbReference type="NCBI Taxonomy" id="99287"/>
    <lineage>
        <taxon>Bacteria</taxon>
        <taxon>Pseudomonadati</taxon>
        <taxon>Pseudomonadota</taxon>
        <taxon>Gammaproteobacteria</taxon>
        <taxon>Enterobacterales</taxon>
        <taxon>Enterobacteriaceae</taxon>
        <taxon>Salmonella</taxon>
    </lineage>
</organism>
<reference key="1">
    <citation type="journal article" date="2001" name="Nature">
        <title>Complete genome sequence of Salmonella enterica serovar Typhimurium LT2.</title>
        <authorList>
            <person name="McClelland M."/>
            <person name="Sanderson K.E."/>
            <person name="Spieth J."/>
            <person name="Clifton S.W."/>
            <person name="Latreille P."/>
            <person name="Courtney L."/>
            <person name="Porwollik S."/>
            <person name="Ali J."/>
            <person name="Dante M."/>
            <person name="Du F."/>
            <person name="Hou S."/>
            <person name="Layman D."/>
            <person name="Leonard S."/>
            <person name="Nguyen C."/>
            <person name="Scott K."/>
            <person name="Holmes A."/>
            <person name="Grewal N."/>
            <person name="Mulvaney E."/>
            <person name="Ryan E."/>
            <person name="Sun H."/>
            <person name="Florea L."/>
            <person name="Miller W."/>
            <person name="Stoneking T."/>
            <person name="Nhan M."/>
            <person name="Waterston R."/>
            <person name="Wilson R.K."/>
        </authorList>
    </citation>
    <scope>NUCLEOTIDE SEQUENCE [LARGE SCALE GENOMIC DNA]</scope>
    <source>
        <strain>LT2 / SGSC1412 / ATCC 700720</strain>
    </source>
</reference>
<dbReference type="EMBL" id="AE006471">
    <property type="protein sequence ID" value="AAL23475.1"/>
    <property type="molecule type" value="Genomic_DNA"/>
</dbReference>
<dbReference type="RefSeq" id="NP_490555.1">
    <property type="nucleotide sequence ID" value="NC_003277.2"/>
</dbReference>
<dbReference type="RefSeq" id="WP_000131520.1">
    <property type="nucleotide sequence ID" value="NC_003277.2"/>
</dbReference>
<dbReference type="SMR" id="Q93GP6"/>
<dbReference type="GeneID" id="1256168"/>
<dbReference type="KEGG" id="stm:PSLT067"/>
<dbReference type="PATRIC" id="fig|99287.12.peg.4927"/>
<dbReference type="HOGENOM" id="CLU_182912_1_0_6"/>
<dbReference type="OMA" id="RYITRYG"/>
<dbReference type="PhylomeDB" id="Q93GP6"/>
<dbReference type="BioCyc" id="SENT99287:PSLT067-MONOMER"/>
<dbReference type="Proteomes" id="UP000001014">
    <property type="component" value="Plasmid pSLT"/>
</dbReference>
<dbReference type="Gene3D" id="3.30.160.130">
    <property type="entry name" value="ykff protein like domains"/>
    <property type="match status" value="1"/>
</dbReference>
<dbReference type="InterPro" id="IPR009253">
    <property type="entry name" value="DUF905"/>
</dbReference>
<dbReference type="InterPro" id="IPR038612">
    <property type="entry name" value="YkfF-like_sf"/>
</dbReference>
<dbReference type="Pfam" id="PF06006">
    <property type="entry name" value="DUF905"/>
    <property type="match status" value="1"/>
</dbReference>
<dbReference type="SUPFAM" id="SSF54786">
    <property type="entry name" value="YcfA/nrd intein domain"/>
    <property type="match status" value="1"/>
</dbReference>
<geneLocation type="plasmid">
    <name>pSLT</name>
</geneLocation>
<evidence type="ECO:0000305" key="1"/>
<keyword id="KW-0614">Plasmid</keyword>
<keyword id="KW-1185">Reference proteome</keyword>
<accession>Q93GP6</accession>
<gene>
    <name type="primary">yubL</name>
    <name type="ordered locus">PSLT067</name>
</gene>
<proteinExistence type="inferred from homology"/>
<comment type="similarity">
    <text evidence="1">Belongs to the UPF0401 family.</text>
</comment>
<sequence length="80" mass="9174">MTDNIMSPLKSLPDGTFTHEQAEAVAAQYQNVAIEDDQGTHLRLVVRKDGEMVWRGWNFEPGGEYWLNRCIESHGIRKTQ</sequence>
<protein>
    <recommendedName>
        <fullName>UPF0401 protein YubL</fullName>
    </recommendedName>
</protein>
<name>YUBL_SALTY</name>